<reference key="1">
    <citation type="journal article" date="2009" name="PLoS Genet.">
        <title>Organised genome dynamics in the Escherichia coli species results in highly diverse adaptive paths.</title>
        <authorList>
            <person name="Touchon M."/>
            <person name="Hoede C."/>
            <person name="Tenaillon O."/>
            <person name="Barbe V."/>
            <person name="Baeriswyl S."/>
            <person name="Bidet P."/>
            <person name="Bingen E."/>
            <person name="Bonacorsi S."/>
            <person name="Bouchier C."/>
            <person name="Bouvet O."/>
            <person name="Calteau A."/>
            <person name="Chiapello H."/>
            <person name="Clermont O."/>
            <person name="Cruveiller S."/>
            <person name="Danchin A."/>
            <person name="Diard M."/>
            <person name="Dossat C."/>
            <person name="Karoui M.E."/>
            <person name="Frapy E."/>
            <person name="Garry L."/>
            <person name="Ghigo J.M."/>
            <person name="Gilles A.M."/>
            <person name="Johnson J."/>
            <person name="Le Bouguenec C."/>
            <person name="Lescat M."/>
            <person name="Mangenot S."/>
            <person name="Martinez-Jehanne V."/>
            <person name="Matic I."/>
            <person name="Nassif X."/>
            <person name="Oztas S."/>
            <person name="Petit M.A."/>
            <person name="Pichon C."/>
            <person name="Rouy Z."/>
            <person name="Ruf C.S."/>
            <person name="Schneider D."/>
            <person name="Tourret J."/>
            <person name="Vacherie B."/>
            <person name="Vallenet D."/>
            <person name="Medigue C."/>
            <person name="Rocha E.P.C."/>
            <person name="Denamur E."/>
        </authorList>
    </citation>
    <scope>NUCLEOTIDE SEQUENCE [LARGE SCALE GENOMIC DNA]</scope>
    <source>
        <strain>UMN026 / ExPEC</strain>
    </source>
</reference>
<sequence length="152" mass="16951">MTIWVDADACPNVIKEILYRAAERMQLPLVLVANQSLRVPPSRFIRTLRVAAGFDVADNEIVRQCEAGDLVITADIPLAAEAIEKGAAALNPRGERYTPATIRERLTMRDFMDTLRASGIQTGGPDSLSQRDRQAFAAELEKWWLEVQRSRG</sequence>
<accession>B7N8T9</accession>
<dbReference type="EMBL" id="CU928163">
    <property type="protein sequence ID" value="CAR11640.1"/>
    <property type="molecule type" value="Genomic_DNA"/>
</dbReference>
<dbReference type="RefSeq" id="WP_000158145.1">
    <property type="nucleotide sequence ID" value="NC_011751.1"/>
</dbReference>
<dbReference type="RefSeq" id="YP_002411188.1">
    <property type="nucleotide sequence ID" value="NC_011751.1"/>
</dbReference>
<dbReference type="STRING" id="585056.ECUMN_0425"/>
<dbReference type="KEGG" id="eum:ECUMN_0425"/>
<dbReference type="PATRIC" id="fig|585056.7.peg.624"/>
<dbReference type="HOGENOM" id="CLU_106619_2_1_6"/>
<dbReference type="Proteomes" id="UP000007097">
    <property type="component" value="Chromosome"/>
</dbReference>
<dbReference type="CDD" id="cd18720">
    <property type="entry name" value="PIN_YqxD-like"/>
    <property type="match status" value="1"/>
</dbReference>
<dbReference type="HAMAP" id="MF_00489">
    <property type="entry name" value="UPF0178"/>
    <property type="match status" value="1"/>
</dbReference>
<dbReference type="InterPro" id="IPR003791">
    <property type="entry name" value="UPF0178"/>
</dbReference>
<dbReference type="NCBIfam" id="NF001095">
    <property type="entry name" value="PRK00124.1"/>
    <property type="match status" value="1"/>
</dbReference>
<dbReference type="PANTHER" id="PTHR35146">
    <property type="entry name" value="UPF0178 PROTEIN YAII"/>
    <property type="match status" value="1"/>
</dbReference>
<dbReference type="PANTHER" id="PTHR35146:SF1">
    <property type="entry name" value="UPF0178 PROTEIN YAII"/>
    <property type="match status" value="1"/>
</dbReference>
<dbReference type="Pfam" id="PF02639">
    <property type="entry name" value="DUF188"/>
    <property type="match status" value="1"/>
</dbReference>
<name>YAII_ECOLU</name>
<protein>
    <recommendedName>
        <fullName evidence="1">UPF0178 protein YaiI</fullName>
    </recommendedName>
</protein>
<organism>
    <name type="scientific">Escherichia coli O17:K52:H18 (strain UMN026 / ExPEC)</name>
    <dbReference type="NCBI Taxonomy" id="585056"/>
    <lineage>
        <taxon>Bacteria</taxon>
        <taxon>Pseudomonadati</taxon>
        <taxon>Pseudomonadota</taxon>
        <taxon>Gammaproteobacteria</taxon>
        <taxon>Enterobacterales</taxon>
        <taxon>Enterobacteriaceae</taxon>
        <taxon>Escherichia</taxon>
    </lineage>
</organism>
<comment type="similarity">
    <text evidence="1">Belongs to the UPF0178 family.</text>
</comment>
<feature type="chain" id="PRO_1000126189" description="UPF0178 protein YaiI">
    <location>
        <begin position="1"/>
        <end position="152"/>
    </location>
</feature>
<gene>
    <name evidence="1" type="primary">yaiI</name>
    <name type="ordered locus">ECUMN_0425</name>
</gene>
<evidence type="ECO:0000255" key="1">
    <source>
        <dbReference type="HAMAP-Rule" id="MF_00489"/>
    </source>
</evidence>
<proteinExistence type="inferred from homology"/>